<name>TF2B2_HALSA</name>
<reference key="1">
    <citation type="journal article" date="2000" name="Proc. Natl. Acad. Sci. U.S.A.">
        <title>Genome sequence of Halobacterium species NRC-1.</title>
        <authorList>
            <person name="Ng W.V."/>
            <person name="Kennedy S.P."/>
            <person name="Mahairas G.G."/>
            <person name="Berquist B."/>
            <person name="Pan M."/>
            <person name="Shukla H.D."/>
            <person name="Lasky S.R."/>
            <person name="Baliga N.S."/>
            <person name="Thorsson V."/>
            <person name="Sbrogna J."/>
            <person name="Swartzell S."/>
            <person name="Weir D."/>
            <person name="Hall J."/>
            <person name="Dahl T.A."/>
            <person name="Welti R."/>
            <person name="Goo Y.A."/>
            <person name="Leithauser B."/>
            <person name="Keller K."/>
            <person name="Cruz R."/>
            <person name="Danson M.J."/>
            <person name="Hough D.W."/>
            <person name="Maddocks D.G."/>
            <person name="Jablonski P.E."/>
            <person name="Krebs M.P."/>
            <person name="Angevine C.M."/>
            <person name="Dale H."/>
            <person name="Isenbarger T.A."/>
            <person name="Peck R.F."/>
            <person name="Pohlschroder M."/>
            <person name="Spudich J.L."/>
            <person name="Jung K.-H."/>
            <person name="Alam M."/>
            <person name="Freitas T."/>
            <person name="Hou S."/>
            <person name="Daniels C.J."/>
            <person name="Dennis P.P."/>
            <person name="Omer A.D."/>
            <person name="Ebhardt H."/>
            <person name="Lowe T.M."/>
            <person name="Liang P."/>
            <person name="Riley M."/>
            <person name="Hood L."/>
            <person name="DasSarma S."/>
        </authorList>
    </citation>
    <scope>NUCLEOTIDE SEQUENCE [LARGE SCALE GENOMIC DNA]</scope>
    <source>
        <strain>ATCC 700922 / JCM 11081 / NRC-1</strain>
    </source>
</reference>
<accession>Q9HRE6</accession>
<dbReference type="EMBL" id="AE004437">
    <property type="protein sequence ID" value="AAG19212.1"/>
    <property type="molecule type" value="Genomic_DNA"/>
</dbReference>
<dbReference type="PIR" id="H84230">
    <property type="entry name" value="H84230"/>
</dbReference>
<dbReference type="RefSeq" id="WP_010902508.1">
    <property type="nucleotide sequence ID" value="NC_002607.1"/>
</dbReference>
<dbReference type="SMR" id="Q9HRE6"/>
<dbReference type="FunCoup" id="Q9HRE6">
    <property type="interactions" value="5"/>
</dbReference>
<dbReference type="STRING" id="64091.VNG_0734G"/>
<dbReference type="PaxDb" id="64091-VNG_0734G"/>
<dbReference type="KEGG" id="hal:VNG_0734G"/>
<dbReference type="PATRIC" id="fig|64091.14.peg.561"/>
<dbReference type="HOGENOM" id="CLU_043736_0_0_2"/>
<dbReference type="InParanoid" id="Q9HRE6"/>
<dbReference type="OrthoDB" id="7429at2157"/>
<dbReference type="PhylomeDB" id="Q9HRE6"/>
<dbReference type="Proteomes" id="UP000000554">
    <property type="component" value="Chromosome"/>
</dbReference>
<dbReference type="GO" id="GO:0097550">
    <property type="term" value="C:transcription preinitiation complex"/>
    <property type="evidence" value="ECO:0000318"/>
    <property type="project" value="GO_Central"/>
</dbReference>
<dbReference type="GO" id="GO:0003700">
    <property type="term" value="F:DNA-binding transcription factor activity"/>
    <property type="evidence" value="ECO:0007669"/>
    <property type="project" value="UniProtKB-UniRule"/>
</dbReference>
<dbReference type="GO" id="GO:0017025">
    <property type="term" value="F:TBP-class protein binding"/>
    <property type="evidence" value="ECO:0007669"/>
    <property type="project" value="InterPro"/>
</dbReference>
<dbReference type="GO" id="GO:0008270">
    <property type="term" value="F:zinc ion binding"/>
    <property type="evidence" value="ECO:0007669"/>
    <property type="project" value="UniProtKB-UniRule"/>
</dbReference>
<dbReference type="GO" id="GO:0006352">
    <property type="term" value="P:DNA-templated transcription initiation"/>
    <property type="evidence" value="ECO:0000318"/>
    <property type="project" value="GO_Central"/>
</dbReference>
<dbReference type="GO" id="GO:0070897">
    <property type="term" value="P:transcription preinitiation complex assembly"/>
    <property type="evidence" value="ECO:0007669"/>
    <property type="project" value="InterPro"/>
</dbReference>
<dbReference type="CDD" id="cd20549">
    <property type="entry name" value="CYCLIN_TFIIB_archaea_like_rpt1"/>
    <property type="match status" value="1"/>
</dbReference>
<dbReference type="CDD" id="cd20550">
    <property type="entry name" value="CYCLIN_TFIIB_archaea_like_rpt2"/>
    <property type="match status" value="1"/>
</dbReference>
<dbReference type="FunFam" id="1.10.472.10:FF:000023">
    <property type="entry name" value="Transcription initiation factor IIB"/>
    <property type="match status" value="1"/>
</dbReference>
<dbReference type="FunFam" id="1.10.472.170:FF:000001">
    <property type="entry name" value="Transcription initiation factor IIB"/>
    <property type="match status" value="1"/>
</dbReference>
<dbReference type="Gene3D" id="1.10.472.170">
    <property type="match status" value="1"/>
</dbReference>
<dbReference type="Gene3D" id="1.10.472.10">
    <property type="entry name" value="Cyclin-like"/>
    <property type="match status" value="1"/>
</dbReference>
<dbReference type="HAMAP" id="MF_00383">
    <property type="entry name" value="TF2B_arch"/>
    <property type="match status" value="1"/>
</dbReference>
<dbReference type="InterPro" id="IPR013763">
    <property type="entry name" value="Cyclin-like_dom"/>
</dbReference>
<dbReference type="InterPro" id="IPR036915">
    <property type="entry name" value="Cyclin-like_sf"/>
</dbReference>
<dbReference type="InterPro" id="IPR000812">
    <property type="entry name" value="TFIIB"/>
</dbReference>
<dbReference type="InterPro" id="IPR023484">
    <property type="entry name" value="TFIIB_arc"/>
</dbReference>
<dbReference type="InterPro" id="IPR023486">
    <property type="entry name" value="TFIIB_CS"/>
</dbReference>
<dbReference type="InterPro" id="IPR013150">
    <property type="entry name" value="TFIIB_cyclin"/>
</dbReference>
<dbReference type="InterPro" id="IPR013137">
    <property type="entry name" value="Znf_TFIIB"/>
</dbReference>
<dbReference type="NCBIfam" id="NF001658">
    <property type="entry name" value="PRK00423.1"/>
    <property type="match status" value="1"/>
</dbReference>
<dbReference type="PANTHER" id="PTHR11618:SF13">
    <property type="entry name" value="TRANSCRIPTION INITIATION FACTOR IIB"/>
    <property type="match status" value="1"/>
</dbReference>
<dbReference type="PANTHER" id="PTHR11618">
    <property type="entry name" value="TRANSCRIPTION INITIATION FACTOR IIB-RELATED"/>
    <property type="match status" value="1"/>
</dbReference>
<dbReference type="Pfam" id="PF00382">
    <property type="entry name" value="TFIIB"/>
    <property type="match status" value="2"/>
</dbReference>
<dbReference type="Pfam" id="PF08271">
    <property type="entry name" value="Zn_Ribbon_TF"/>
    <property type="match status" value="1"/>
</dbReference>
<dbReference type="PRINTS" id="PR00685">
    <property type="entry name" value="TIFACTORIIB"/>
</dbReference>
<dbReference type="SMART" id="SM00385">
    <property type="entry name" value="CYCLIN"/>
    <property type="match status" value="2"/>
</dbReference>
<dbReference type="SUPFAM" id="SSF47954">
    <property type="entry name" value="Cyclin-like"/>
    <property type="match status" value="2"/>
</dbReference>
<dbReference type="SUPFAM" id="SSF57783">
    <property type="entry name" value="Zinc beta-ribbon"/>
    <property type="match status" value="1"/>
</dbReference>
<dbReference type="PROSITE" id="PS00782">
    <property type="entry name" value="TFIIB"/>
    <property type="match status" value="2"/>
</dbReference>
<dbReference type="PROSITE" id="PS51134">
    <property type="entry name" value="ZF_TFIIB"/>
    <property type="match status" value="1"/>
</dbReference>
<keyword id="KW-0479">Metal-binding</keyword>
<keyword id="KW-1185">Reference proteome</keyword>
<keyword id="KW-0677">Repeat</keyword>
<keyword id="KW-0804">Transcription</keyword>
<keyword id="KW-0805">Transcription regulation</keyword>
<keyword id="KW-0862">Zinc</keyword>
<keyword id="KW-0863">Zinc-finger</keyword>
<gene>
    <name evidence="1" type="primary">tfbB</name>
    <name type="ordered locus">VNG_0734G</name>
</gene>
<proteinExistence type="inferred from homology"/>
<protein>
    <recommendedName>
        <fullName evidence="1">Transcription initiation factor IIB 2</fullName>
        <shortName evidence="1">TFIIB 2</shortName>
    </recommendedName>
</protein>
<organism>
    <name type="scientific">Halobacterium salinarum (strain ATCC 700922 / JCM 11081 / NRC-1)</name>
    <name type="common">Halobacterium halobium</name>
    <dbReference type="NCBI Taxonomy" id="64091"/>
    <lineage>
        <taxon>Archaea</taxon>
        <taxon>Methanobacteriati</taxon>
        <taxon>Methanobacteriota</taxon>
        <taxon>Stenosarchaea group</taxon>
        <taxon>Halobacteria</taxon>
        <taxon>Halobacteriales</taxon>
        <taxon>Halobacteriaceae</taxon>
        <taxon>Halobacterium</taxon>
        <taxon>Halobacterium salinarum NRC-34001</taxon>
    </lineage>
</organism>
<sequence length="325" mass="36156">MSDSTIRTYSSDQRQTDNDETVSTPDEDVLTCPECGGQVIDDEEHGESVCVDCGLVVEENGIDRGPEWRAFNSTEKDEKSRVGAPTTNMMHDKGLSTNIGWQDKDAYGNSLSSNQRQKMQRLRKWNERFRTRNSKERNLKQALGEIERMASALGLPKEVRETASVIYRRALSEDLLPGRSIEGVATAALYASARQLSTPRSIDEVANVSRIDEMEFKRTYRYIVRELSLEVAPADPAQYVPRFASDLDLPDEVERRSRELISNAQADGVTSGKSPVGLAAAAIYASSLLTNHKVTQSEVSEVTDVSEVTIRNRYQELLEATEAAA</sequence>
<feature type="chain" id="PRO_0000119312" description="Transcription initiation factor IIB 2">
    <location>
        <begin position="1"/>
        <end position="325"/>
    </location>
</feature>
<feature type="repeat" description="1">
    <location>
        <begin position="144"/>
        <end position="227"/>
    </location>
</feature>
<feature type="repeat" description="2">
    <location>
        <begin position="238"/>
        <end position="319"/>
    </location>
</feature>
<feature type="zinc finger region" description="TFIIB-type" evidence="2">
    <location>
        <begin position="28"/>
        <end position="58"/>
    </location>
</feature>
<feature type="region of interest" description="Disordered" evidence="3">
    <location>
        <begin position="1"/>
        <end position="29"/>
    </location>
</feature>
<feature type="region of interest" description="Disordered" evidence="3">
    <location>
        <begin position="73"/>
        <end position="93"/>
    </location>
</feature>
<feature type="compositionally biased region" description="Polar residues" evidence="3">
    <location>
        <begin position="1"/>
        <end position="13"/>
    </location>
</feature>
<feature type="binding site" evidence="2">
    <location>
        <position position="32"/>
    </location>
    <ligand>
        <name>Zn(2+)</name>
        <dbReference type="ChEBI" id="CHEBI:29105"/>
    </ligand>
</feature>
<feature type="binding site" evidence="2">
    <location>
        <position position="35"/>
    </location>
    <ligand>
        <name>Zn(2+)</name>
        <dbReference type="ChEBI" id="CHEBI:29105"/>
    </ligand>
</feature>
<feature type="binding site" evidence="2">
    <location>
        <position position="50"/>
    </location>
    <ligand>
        <name>Zn(2+)</name>
        <dbReference type="ChEBI" id="CHEBI:29105"/>
    </ligand>
</feature>
<feature type="binding site" evidence="2">
    <location>
        <position position="53"/>
    </location>
    <ligand>
        <name>Zn(2+)</name>
        <dbReference type="ChEBI" id="CHEBI:29105"/>
    </ligand>
</feature>
<comment type="function">
    <text evidence="1">Stabilizes TBP binding to an archaeal box-A promoter. Also responsible for recruiting RNA polymerase II to the pre-initiation complex (DNA-TBP-TFIIB).</text>
</comment>
<comment type="similarity">
    <text evidence="1">Belongs to the TFIIB family.</text>
</comment>
<evidence type="ECO:0000255" key="1">
    <source>
        <dbReference type="HAMAP-Rule" id="MF_00383"/>
    </source>
</evidence>
<evidence type="ECO:0000255" key="2">
    <source>
        <dbReference type="PROSITE-ProRule" id="PRU00469"/>
    </source>
</evidence>
<evidence type="ECO:0000256" key="3">
    <source>
        <dbReference type="SAM" id="MobiDB-lite"/>
    </source>
</evidence>